<sequence length="983" mass="105923">MRPAALLLLPSLLALLVHGLSLEAPTEGEGQAPGLEEMDGELTAAPTPEQPEPGVHFVTTAPTLKLLNHHPLLEEFLQEGQEKDELRPDPPTASPLPRLANQDSRPVFTSPTPVMVAAPTQPQSREGPWSLESEPPALRITVALPPGPGMAVPTPGPGERPNTPPPSGAWTPTPEGPGDIGRPWAPGVMSQTTGLGMEGTVATSTASGDDEETTSTSTIITTAVTTVQPPGPCSWNFSGPEGSLDSPTASNSPPDVGLDCFYYISVYPGYGVEIKVQNISLREGETVTVEGLGGPDPLPLANQSFLLRGQVIRSPTHQAALRFQSLPPPAGPGTFHFHYQAYLLSCHFPRRPAYGAVTVTSLHPGGSARFRCATGYQLKGARLLTCLNATQPFWDSQEPVCIAACGGVIRNATTGRIVSPGFPGNYSNNLTCHWLLEAPEGQRLHLHFEKVSLAEDDDRLIIRNGDNVEAPPVYDSYEVEYLPIEGLLSSSRHFFVELSTDSSGVAAGMALRYEAFQQGHCYEPFVKYGNFSSSAPSYPVGTTVEFSCDPGYTLEQGSIIIECVDPHDPQWNETEPACRAVCSGETTDSAGVVLSPNWPEPYGRGQDCIWGVHVEEDKRIMLDVRVLRIGTGDVLTFYDGDDLTARVLGQYSGPRGHFKLFTSMADVTIQFQSDPGASVLGYQQGFVIHFFEVPRNDTCPELPEIPNGWKSPSQPELVHGTVVTYQCYPGYQVVGSSVLMCQWDLTWSEDLPSCQRVTSCLDPGDVEHSRRLISSPKFPVGATVQYICDQGFVLTGSALLTCHDRQASSPKWSDRTPKCLLEQLKPCHGLSAPENGARSPEKRLHPAGATVHFSCAPGYVLKGQASIKCVPGHPSHWSDPPPICRAASLDGFYSGRSLDVAKVPAASSTLDAAHLAAAIFLPLVAMALLVGGVYLYFCRLQGNSPLQLPRTRPRPYDRITVESAFDNPTYETGSLSFAGDERI</sequence>
<accession>A0JNA2</accession>
<reference key="1">
    <citation type="submission" date="2006-10" db="EMBL/GenBank/DDBJ databases">
        <authorList>
            <consortium name="NIH - Mammalian Gene Collection (MGC) project"/>
        </authorList>
    </citation>
    <scope>NUCLEOTIDE SEQUENCE [LARGE SCALE MRNA]</scope>
    <source>
        <strain>Hereford</strain>
        <tissue>Fetal pons</tissue>
    </source>
</reference>
<name>SEZ6_BOVIN</name>
<keyword id="KW-1003">Cell membrane</keyword>
<keyword id="KW-1015">Disulfide bond</keyword>
<keyword id="KW-0325">Glycoprotein</keyword>
<keyword id="KW-0472">Membrane</keyword>
<keyword id="KW-1185">Reference proteome</keyword>
<keyword id="KW-0677">Repeat</keyword>
<keyword id="KW-0732">Signal</keyword>
<keyword id="KW-0768">Sushi</keyword>
<keyword id="KW-0812">Transmembrane</keyword>
<keyword id="KW-1133">Transmembrane helix</keyword>
<protein>
    <recommendedName>
        <fullName>Seizure protein 6 homolog</fullName>
        <shortName>SEZ-6</shortName>
    </recommendedName>
</protein>
<gene>
    <name type="primary">SEZ6</name>
</gene>
<proteinExistence type="evidence at transcript level"/>
<comment type="function">
    <text evidence="1">May play a role in cell-cell recognition and in neuronal membrane signaling. Seems to be important for the achievement of the necessary balance between dendrite elongation and branching during the elaboration of a complex dendritic arbor. Involved in the development of appropriate excitatory synaptic connectivity (By similarity).</text>
</comment>
<comment type="subcellular location">
    <subcellularLocation>
        <location evidence="1">Cell membrane</location>
        <topology evidence="1">Single-pass type I membrane protein</topology>
    </subcellularLocation>
    <text evidence="1">Localized on dendrites and in the synaptic and postsynaptic fraction.</text>
</comment>
<comment type="similarity">
    <text evidence="6">Belongs to the SEZ6 family.</text>
</comment>
<dbReference type="EMBL" id="BC126583">
    <property type="protein sequence ID" value="AAI26584.1"/>
    <property type="molecule type" value="mRNA"/>
</dbReference>
<dbReference type="RefSeq" id="NP_001071486.1">
    <property type="nucleotide sequence ID" value="NM_001078018.2"/>
</dbReference>
<dbReference type="SMR" id="A0JNA2"/>
<dbReference type="FunCoup" id="A0JNA2">
    <property type="interactions" value="618"/>
</dbReference>
<dbReference type="STRING" id="9913.ENSBTAP00000069816"/>
<dbReference type="GlyCosmos" id="A0JNA2">
    <property type="glycosylation" value="4 sites, No reported glycans"/>
</dbReference>
<dbReference type="GlyGen" id="A0JNA2">
    <property type="glycosylation" value="4 sites"/>
</dbReference>
<dbReference type="PaxDb" id="9913-ENSBTAP00000021257"/>
<dbReference type="GeneID" id="539038"/>
<dbReference type="KEGG" id="bta:539038"/>
<dbReference type="CTD" id="124925"/>
<dbReference type="eggNOG" id="KOG4297">
    <property type="taxonomic scope" value="Eukaryota"/>
</dbReference>
<dbReference type="InParanoid" id="A0JNA2"/>
<dbReference type="OrthoDB" id="9935125at2759"/>
<dbReference type="Proteomes" id="UP000009136">
    <property type="component" value="Unplaced"/>
</dbReference>
<dbReference type="GO" id="GO:0043198">
    <property type="term" value="C:dendritic shaft"/>
    <property type="evidence" value="ECO:0000318"/>
    <property type="project" value="GO_Central"/>
</dbReference>
<dbReference type="GO" id="GO:0043197">
    <property type="term" value="C:dendritic spine"/>
    <property type="evidence" value="ECO:0000318"/>
    <property type="project" value="GO_Central"/>
</dbReference>
<dbReference type="GO" id="GO:0005783">
    <property type="term" value="C:endoplasmic reticulum"/>
    <property type="evidence" value="ECO:0000318"/>
    <property type="project" value="GO_Central"/>
</dbReference>
<dbReference type="GO" id="GO:0043025">
    <property type="term" value="C:neuronal cell body"/>
    <property type="evidence" value="ECO:0000318"/>
    <property type="project" value="GO_Central"/>
</dbReference>
<dbReference type="GO" id="GO:0005886">
    <property type="term" value="C:plasma membrane"/>
    <property type="evidence" value="ECO:0007669"/>
    <property type="project" value="UniProtKB-SubCell"/>
</dbReference>
<dbReference type="GO" id="GO:0050773">
    <property type="term" value="P:regulation of dendrite development"/>
    <property type="evidence" value="ECO:0000318"/>
    <property type="project" value="GO_Central"/>
</dbReference>
<dbReference type="GO" id="GO:0060074">
    <property type="term" value="P:synapse maturation"/>
    <property type="evidence" value="ECO:0000318"/>
    <property type="project" value="GO_Central"/>
</dbReference>
<dbReference type="CDD" id="cd00033">
    <property type="entry name" value="CCP"/>
    <property type="match status" value="5"/>
</dbReference>
<dbReference type="CDD" id="cd00041">
    <property type="entry name" value="CUB"/>
    <property type="match status" value="3"/>
</dbReference>
<dbReference type="FunFam" id="2.60.120.290:FF:000015">
    <property type="entry name" value="Seizure protein 6 homolog isoform 2"/>
    <property type="match status" value="1"/>
</dbReference>
<dbReference type="FunFam" id="2.10.70.10:FF:000009">
    <property type="entry name" value="Seizure related 6 homolog like"/>
    <property type="match status" value="1"/>
</dbReference>
<dbReference type="FunFam" id="2.10.70.10:FF:000010">
    <property type="entry name" value="Seizure related 6 homolog like"/>
    <property type="match status" value="1"/>
</dbReference>
<dbReference type="FunFam" id="2.10.70.10:FF:000012">
    <property type="entry name" value="Seizure related 6 homolog like"/>
    <property type="match status" value="1"/>
</dbReference>
<dbReference type="Gene3D" id="2.10.70.10">
    <property type="entry name" value="Complement Module, domain 1"/>
    <property type="match status" value="5"/>
</dbReference>
<dbReference type="Gene3D" id="2.60.120.290">
    <property type="entry name" value="Spermadhesin, CUB domain"/>
    <property type="match status" value="2"/>
</dbReference>
<dbReference type="InterPro" id="IPR000859">
    <property type="entry name" value="CUB_dom"/>
</dbReference>
<dbReference type="InterPro" id="IPR051277">
    <property type="entry name" value="SEZ6_CSMD_C4BPB_Regulators"/>
</dbReference>
<dbReference type="InterPro" id="IPR035914">
    <property type="entry name" value="Sperma_CUB_dom_sf"/>
</dbReference>
<dbReference type="InterPro" id="IPR035976">
    <property type="entry name" value="Sushi/SCR/CCP_sf"/>
</dbReference>
<dbReference type="InterPro" id="IPR000436">
    <property type="entry name" value="Sushi_SCR_CCP_dom"/>
</dbReference>
<dbReference type="PANTHER" id="PTHR45656">
    <property type="entry name" value="PROTEIN CBR-CLEC-78"/>
    <property type="match status" value="1"/>
</dbReference>
<dbReference type="PANTHER" id="PTHR45656:SF4">
    <property type="entry name" value="PROTEIN CBR-CLEC-78"/>
    <property type="match status" value="1"/>
</dbReference>
<dbReference type="Pfam" id="PF00431">
    <property type="entry name" value="CUB"/>
    <property type="match status" value="2"/>
</dbReference>
<dbReference type="Pfam" id="PF00084">
    <property type="entry name" value="Sushi"/>
    <property type="match status" value="5"/>
</dbReference>
<dbReference type="SMART" id="SM00032">
    <property type="entry name" value="CCP"/>
    <property type="match status" value="5"/>
</dbReference>
<dbReference type="SMART" id="SM00042">
    <property type="entry name" value="CUB"/>
    <property type="match status" value="2"/>
</dbReference>
<dbReference type="SUPFAM" id="SSF57535">
    <property type="entry name" value="Complement control module/SCR domain"/>
    <property type="match status" value="5"/>
</dbReference>
<dbReference type="SUPFAM" id="SSF49854">
    <property type="entry name" value="Spermadhesin, CUB domain"/>
    <property type="match status" value="3"/>
</dbReference>
<dbReference type="PROSITE" id="PS01180">
    <property type="entry name" value="CUB"/>
    <property type="match status" value="2"/>
</dbReference>
<dbReference type="PROSITE" id="PS50923">
    <property type="entry name" value="SUSHI"/>
    <property type="match status" value="5"/>
</dbReference>
<evidence type="ECO:0000250" key="1"/>
<evidence type="ECO:0000255" key="2"/>
<evidence type="ECO:0000255" key="3">
    <source>
        <dbReference type="PROSITE-ProRule" id="PRU00059"/>
    </source>
</evidence>
<evidence type="ECO:0000255" key="4">
    <source>
        <dbReference type="PROSITE-ProRule" id="PRU00302"/>
    </source>
</evidence>
<evidence type="ECO:0000256" key="5">
    <source>
        <dbReference type="SAM" id="MobiDB-lite"/>
    </source>
</evidence>
<evidence type="ECO:0000305" key="6"/>
<organism>
    <name type="scientific">Bos taurus</name>
    <name type="common">Bovine</name>
    <dbReference type="NCBI Taxonomy" id="9913"/>
    <lineage>
        <taxon>Eukaryota</taxon>
        <taxon>Metazoa</taxon>
        <taxon>Chordata</taxon>
        <taxon>Craniata</taxon>
        <taxon>Vertebrata</taxon>
        <taxon>Euteleostomi</taxon>
        <taxon>Mammalia</taxon>
        <taxon>Eutheria</taxon>
        <taxon>Laurasiatheria</taxon>
        <taxon>Artiodactyla</taxon>
        <taxon>Ruminantia</taxon>
        <taxon>Pecora</taxon>
        <taxon>Bovidae</taxon>
        <taxon>Bovinae</taxon>
        <taxon>Bos</taxon>
    </lineage>
</organism>
<feature type="signal peptide" evidence="2">
    <location>
        <begin position="1"/>
        <end position="19"/>
    </location>
</feature>
<feature type="chain" id="PRO_0000341347" description="Seizure protein 6 homolog">
    <location>
        <begin position="20"/>
        <end position="983"/>
    </location>
</feature>
<feature type="transmembrane region" description="Helical" evidence="2">
    <location>
        <begin position="915"/>
        <end position="935"/>
    </location>
</feature>
<feature type="domain" description="Sushi 1" evidence="4">
    <location>
        <begin position="344"/>
        <end position="403"/>
    </location>
</feature>
<feature type="domain" description="CUB 1" evidence="3">
    <location>
        <begin position="405"/>
        <end position="516"/>
    </location>
</feature>
<feature type="domain" description="Sushi 2" evidence="4">
    <location>
        <begin position="519"/>
        <end position="580"/>
    </location>
</feature>
<feature type="domain" description="CUB 2" evidence="3">
    <location>
        <begin position="582"/>
        <end position="693"/>
    </location>
</feature>
<feature type="domain" description="Sushi 3" evidence="4">
    <location>
        <begin position="697"/>
        <end position="756"/>
    </location>
</feature>
<feature type="domain" description="Sushi 4" evidence="4">
    <location>
        <begin position="758"/>
        <end position="821"/>
    </location>
</feature>
<feature type="domain" description="Sushi 5" evidence="4">
    <location>
        <begin position="825"/>
        <end position="886"/>
    </location>
</feature>
<feature type="region of interest" description="Disordered" evidence="5">
    <location>
        <begin position="80"/>
        <end position="132"/>
    </location>
</feature>
<feature type="region of interest" description="Disordered" evidence="5">
    <location>
        <begin position="148"/>
        <end position="194"/>
    </location>
</feature>
<feature type="compositionally biased region" description="Polar residues" evidence="5">
    <location>
        <begin position="101"/>
        <end position="112"/>
    </location>
</feature>
<feature type="compositionally biased region" description="Pro residues" evidence="5">
    <location>
        <begin position="154"/>
        <end position="167"/>
    </location>
</feature>
<feature type="glycosylation site" description="N-linked (GlcNAc...) asparagine" evidence="2">
    <location>
        <position position="278"/>
    </location>
</feature>
<feature type="glycosylation site" description="N-linked (GlcNAc...) asparagine" evidence="2">
    <location>
        <position position="388"/>
    </location>
</feature>
<feature type="glycosylation site" description="N-linked (GlcNAc...) asparagine" evidence="2">
    <location>
        <position position="425"/>
    </location>
</feature>
<feature type="glycosylation site" description="N-linked (GlcNAc...) asparagine" evidence="2">
    <location>
        <position position="530"/>
    </location>
</feature>
<feature type="disulfide bond" evidence="1">
    <location>
        <begin position="346"/>
        <end position="386"/>
    </location>
</feature>
<feature type="disulfide bond" evidence="1">
    <location>
        <begin position="372"/>
        <end position="401"/>
    </location>
</feature>
<feature type="disulfide bond" evidence="1">
    <location>
        <begin position="405"/>
        <end position="432"/>
    </location>
</feature>
<feature type="disulfide bond" evidence="1">
    <location>
        <begin position="521"/>
        <end position="563"/>
    </location>
</feature>
<feature type="disulfide bond" evidence="1">
    <location>
        <begin position="548"/>
        <end position="578"/>
    </location>
</feature>
<feature type="disulfide bond" evidence="1">
    <location>
        <begin position="582"/>
        <end position="608"/>
    </location>
</feature>
<feature type="disulfide bond" evidence="1">
    <location>
        <begin position="699"/>
        <end position="741"/>
    </location>
</feature>
<feature type="disulfide bond" evidence="1">
    <location>
        <begin position="727"/>
        <end position="754"/>
    </location>
</feature>
<feature type="disulfide bond" evidence="1">
    <location>
        <begin position="760"/>
        <end position="802"/>
    </location>
</feature>
<feature type="disulfide bond" evidence="1">
    <location>
        <begin position="788"/>
        <end position="819"/>
    </location>
</feature>
<feature type="disulfide bond" evidence="1">
    <location>
        <begin position="827"/>
        <end position="869"/>
    </location>
</feature>
<feature type="disulfide bond" evidence="1">
    <location>
        <begin position="855"/>
        <end position="884"/>
    </location>
</feature>